<keyword id="KW-0175">Coiled coil</keyword>
<keyword id="KW-0539">Nucleus</keyword>
<keyword id="KW-1185">Reference proteome</keyword>
<keyword id="KW-0690">Ribosome biogenesis</keyword>
<keyword id="KW-0698">rRNA processing</keyword>
<protein>
    <recommendedName>
        <fullName>rRNA-processing protein CGR1</fullName>
    </recommendedName>
</protein>
<reference key="1">
    <citation type="journal article" date="2004" name="Nature">
        <title>Genome evolution in yeasts.</title>
        <authorList>
            <person name="Dujon B."/>
            <person name="Sherman D."/>
            <person name="Fischer G."/>
            <person name="Durrens P."/>
            <person name="Casaregola S."/>
            <person name="Lafontaine I."/>
            <person name="de Montigny J."/>
            <person name="Marck C."/>
            <person name="Neuveglise C."/>
            <person name="Talla E."/>
            <person name="Goffard N."/>
            <person name="Frangeul L."/>
            <person name="Aigle M."/>
            <person name="Anthouard V."/>
            <person name="Babour A."/>
            <person name="Barbe V."/>
            <person name="Barnay S."/>
            <person name="Blanchin S."/>
            <person name="Beckerich J.-M."/>
            <person name="Beyne E."/>
            <person name="Bleykasten C."/>
            <person name="Boisrame A."/>
            <person name="Boyer J."/>
            <person name="Cattolico L."/>
            <person name="Confanioleri F."/>
            <person name="de Daruvar A."/>
            <person name="Despons L."/>
            <person name="Fabre E."/>
            <person name="Fairhead C."/>
            <person name="Ferry-Dumazet H."/>
            <person name="Groppi A."/>
            <person name="Hantraye F."/>
            <person name="Hennequin C."/>
            <person name="Jauniaux N."/>
            <person name="Joyet P."/>
            <person name="Kachouri R."/>
            <person name="Kerrest A."/>
            <person name="Koszul R."/>
            <person name="Lemaire M."/>
            <person name="Lesur I."/>
            <person name="Ma L."/>
            <person name="Muller H."/>
            <person name="Nicaud J.-M."/>
            <person name="Nikolski M."/>
            <person name="Oztas S."/>
            <person name="Ozier-Kalogeropoulos O."/>
            <person name="Pellenz S."/>
            <person name="Potier S."/>
            <person name="Richard G.-F."/>
            <person name="Straub M.-L."/>
            <person name="Suleau A."/>
            <person name="Swennen D."/>
            <person name="Tekaia F."/>
            <person name="Wesolowski-Louvel M."/>
            <person name="Westhof E."/>
            <person name="Wirth B."/>
            <person name="Zeniou-Meyer M."/>
            <person name="Zivanovic Y."/>
            <person name="Bolotin-Fukuhara M."/>
            <person name="Thierry A."/>
            <person name="Bouchier C."/>
            <person name="Caudron B."/>
            <person name="Scarpelli C."/>
            <person name="Gaillardin C."/>
            <person name="Weissenbach J."/>
            <person name="Wincker P."/>
            <person name="Souciet J.-L."/>
        </authorList>
    </citation>
    <scope>NUCLEOTIDE SEQUENCE [LARGE SCALE GENOMIC DNA]</scope>
    <source>
        <strain>ATCC 8585 / CBS 2359 / DSM 70799 / NBRC 1267 / NRRL Y-1140 / WM37</strain>
    </source>
</reference>
<name>CGR1_KLULA</name>
<evidence type="ECO:0000250" key="1"/>
<evidence type="ECO:0000255" key="2"/>
<evidence type="ECO:0000305" key="3"/>
<organism>
    <name type="scientific">Kluyveromyces lactis (strain ATCC 8585 / CBS 2359 / DSM 70799 / NBRC 1267 / NRRL Y-1140 / WM37)</name>
    <name type="common">Yeast</name>
    <name type="synonym">Candida sphaerica</name>
    <dbReference type="NCBI Taxonomy" id="284590"/>
    <lineage>
        <taxon>Eukaryota</taxon>
        <taxon>Fungi</taxon>
        <taxon>Dikarya</taxon>
        <taxon>Ascomycota</taxon>
        <taxon>Saccharomycotina</taxon>
        <taxon>Saccharomycetes</taxon>
        <taxon>Saccharomycetales</taxon>
        <taxon>Saccharomycetaceae</taxon>
        <taxon>Kluyveromyces</taxon>
    </lineage>
</organism>
<sequence>MSDNTAEQQDIQIKGKPVSGRTWKVEKEPLRAKNRVVKNKKLTSWELKKQKRLEDQQFKEKVRALKEEKKAEKDAVIQALKERRAKKEEQERYDRLAAKMHAKKVDRLRRREKRNKALKER</sequence>
<comment type="function">
    <text evidence="1">Involved in nucleolar integrity and required for processing of the pre-rRNA for the 60S ribosome subunit.</text>
</comment>
<comment type="subcellular location">
    <subcellularLocation>
        <location evidence="1">Nucleus</location>
        <location evidence="1">Nucleolus</location>
    </subcellularLocation>
</comment>
<comment type="similarity">
    <text evidence="3">Belongs to the CGR1 family.</text>
</comment>
<feature type="chain" id="PRO_0000278957" description="rRNA-processing protein CGR1">
    <location>
        <begin position="1"/>
        <end position="121"/>
    </location>
</feature>
<feature type="coiled-coil region" evidence="2">
    <location>
        <begin position="48"/>
        <end position="104"/>
    </location>
</feature>
<proteinExistence type="inferred from homology"/>
<accession>Q6CNQ3</accession>
<dbReference type="EMBL" id="CR382125">
    <property type="protein sequence ID" value="CAG99523.1"/>
    <property type="molecule type" value="Genomic_DNA"/>
</dbReference>
<dbReference type="RefSeq" id="XP_454436.1">
    <property type="nucleotide sequence ID" value="XM_454436.1"/>
</dbReference>
<dbReference type="SMR" id="Q6CNQ3"/>
<dbReference type="FunCoup" id="Q6CNQ3">
    <property type="interactions" value="172"/>
</dbReference>
<dbReference type="STRING" id="284590.Q6CNQ3"/>
<dbReference type="PaxDb" id="284590-Q6CNQ3"/>
<dbReference type="KEGG" id="kla:KLLA0_E10781g"/>
<dbReference type="eggNOG" id="ENOG502S7VB">
    <property type="taxonomic scope" value="Eukaryota"/>
</dbReference>
<dbReference type="HOGENOM" id="CLU_125051_0_1_1"/>
<dbReference type="InParanoid" id="Q6CNQ3"/>
<dbReference type="OMA" id="NGKQWHD"/>
<dbReference type="Proteomes" id="UP000000598">
    <property type="component" value="Chromosome E"/>
</dbReference>
<dbReference type="GO" id="GO:0005730">
    <property type="term" value="C:nucleolus"/>
    <property type="evidence" value="ECO:0007669"/>
    <property type="project" value="UniProtKB-SubCell"/>
</dbReference>
<dbReference type="GO" id="GO:0006364">
    <property type="term" value="P:rRNA processing"/>
    <property type="evidence" value="ECO:0007669"/>
    <property type="project" value="UniProtKB-KW"/>
</dbReference>
<dbReference type="InterPro" id="IPR005579">
    <property type="entry name" value="Cgr1-like"/>
</dbReference>
<dbReference type="Pfam" id="PF03879">
    <property type="entry name" value="Cgr1"/>
    <property type="match status" value="1"/>
</dbReference>
<gene>
    <name type="primary">CGR1</name>
    <name type="ordered locus">KLLA0E10769g</name>
</gene>